<feature type="chain" id="PRO_0000265981" description="Homeobox protein Hox-B6a">
    <location>
        <begin position="1"/>
        <end position="274"/>
    </location>
</feature>
<feature type="DNA-binding region" description="Homeobox" evidence="2">
    <location>
        <begin position="189"/>
        <end position="248"/>
    </location>
</feature>
<feature type="region of interest" description="Disordered" evidence="3">
    <location>
        <begin position="248"/>
        <end position="274"/>
    </location>
</feature>
<feature type="short sequence motif" description="Antp-type hexapeptide">
    <location>
        <begin position="171"/>
        <end position="176"/>
    </location>
</feature>
<keyword id="KW-0217">Developmental protein</keyword>
<keyword id="KW-0238">DNA-binding</keyword>
<keyword id="KW-0371">Homeobox</keyword>
<keyword id="KW-0539">Nucleus</keyword>
<keyword id="KW-1185">Reference proteome</keyword>
<keyword id="KW-0804">Transcription</keyword>
<keyword id="KW-0805">Transcription regulation</keyword>
<sequence>MSSYFVNSSFPVTLPGPGGGGGQAAAESFLGQIPLYSSGYAADHPLRHYPTAAAVAYGAGTTGVHQDKPYTASYYQQTANGAYGGHRAAGVGVGGTTGAGPCDYATAAAAAAAAAAAATSFYRDKEHQCSLEEHQLALGQDGLHRKAECAGLGGKSLFGDPMDDKQSSVPIYPWMQRMNACNGTFGSPGRRGRQTYTRYQTLELEKEFHFNRYLTRRRRIEIAHALCLTERQIKIWFQNRRMKWKKENKLINSSSSSSSSSTVNGTEEEEKQTE</sequence>
<proteinExistence type="inferred from homology"/>
<organism>
    <name type="scientific">Takifugu rubripes</name>
    <name type="common">Japanese pufferfish</name>
    <name type="synonym">Fugu rubripes</name>
    <dbReference type="NCBI Taxonomy" id="31033"/>
    <lineage>
        <taxon>Eukaryota</taxon>
        <taxon>Metazoa</taxon>
        <taxon>Chordata</taxon>
        <taxon>Craniata</taxon>
        <taxon>Vertebrata</taxon>
        <taxon>Euteleostomi</taxon>
        <taxon>Actinopterygii</taxon>
        <taxon>Neopterygii</taxon>
        <taxon>Teleostei</taxon>
        <taxon>Neoteleostei</taxon>
        <taxon>Acanthomorphata</taxon>
        <taxon>Eupercaria</taxon>
        <taxon>Tetraodontiformes</taxon>
        <taxon>Tetradontoidea</taxon>
        <taxon>Tetraodontidae</taxon>
        <taxon>Takifugu</taxon>
    </lineage>
</organism>
<protein>
    <recommendedName>
        <fullName>Homeobox protein Hox-B6a</fullName>
    </recommendedName>
</protein>
<accession>Q1KKY0</accession>
<gene>
    <name type="primary">hoxb6a</name>
</gene>
<reference key="1">
    <citation type="journal article" date="2006" name="Proc. Natl. Acad. Sci. U.S.A.">
        <title>Highly conserved syntenic blocks at the vertebrate Hox loci and conserved regulatory elements within and outside Hox gene clusters.</title>
        <authorList>
            <person name="Lee A.P."/>
            <person name="Koh E.G.L."/>
            <person name="Tay A."/>
            <person name="Brenner S."/>
            <person name="Venkatesh B."/>
        </authorList>
    </citation>
    <scope>NUCLEOTIDE SEQUENCE [GENOMIC DNA]</scope>
</reference>
<comment type="function">
    <text evidence="1">Sequence-specific transcription factor which is part of a developmental regulatory system that provides cells with specific positional identities on the anterior-posterior axis.</text>
</comment>
<comment type="subcellular location">
    <subcellularLocation>
        <location evidence="2">Nucleus</location>
    </subcellularLocation>
</comment>
<comment type="similarity">
    <text evidence="4">Belongs to the Antp homeobox family.</text>
</comment>
<name>HXB6A_TAKRU</name>
<evidence type="ECO:0000250" key="1"/>
<evidence type="ECO:0000255" key="2">
    <source>
        <dbReference type="PROSITE-ProRule" id="PRU00108"/>
    </source>
</evidence>
<evidence type="ECO:0000256" key="3">
    <source>
        <dbReference type="SAM" id="MobiDB-lite"/>
    </source>
</evidence>
<evidence type="ECO:0000305" key="4"/>
<dbReference type="EMBL" id="DQ481665">
    <property type="protein sequence ID" value="ABF22414.1"/>
    <property type="molecule type" value="Genomic_DNA"/>
</dbReference>
<dbReference type="RefSeq" id="XP_003964306.1">
    <property type="nucleotide sequence ID" value="XM_003964257.2"/>
</dbReference>
<dbReference type="BMRB" id="Q1KKY0"/>
<dbReference type="STRING" id="31033.ENSTRUP00000070485"/>
<dbReference type="GeneID" id="101072768"/>
<dbReference type="KEGG" id="tru:101072768"/>
<dbReference type="eggNOG" id="KOG0489">
    <property type="taxonomic scope" value="Eukaryota"/>
</dbReference>
<dbReference type="InParanoid" id="Q1KKY0"/>
<dbReference type="OrthoDB" id="6159439at2759"/>
<dbReference type="Proteomes" id="UP000005226">
    <property type="component" value="Unplaced"/>
</dbReference>
<dbReference type="GO" id="GO:0005634">
    <property type="term" value="C:nucleus"/>
    <property type="evidence" value="ECO:0007669"/>
    <property type="project" value="UniProtKB-SubCell"/>
</dbReference>
<dbReference type="GO" id="GO:0000981">
    <property type="term" value="F:DNA-binding transcription factor activity, RNA polymerase II-specific"/>
    <property type="evidence" value="ECO:0007669"/>
    <property type="project" value="InterPro"/>
</dbReference>
<dbReference type="GO" id="GO:0000978">
    <property type="term" value="F:RNA polymerase II cis-regulatory region sequence-specific DNA binding"/>
    <property type="evidence" value="ECO:0007669"/>
    <property type="project" value="TreeGrafter"/>
</dbReference>
<dbReference type="GO" id="GO:0009952">
    <property type="term" value="P:anterior/posterior pattern specification"/>
    <property type="evidence" value="ECO:0007669"/>
    <property type="project" value="TreeGrafter"/>
</dbReference>
<dbReference type="CDD" id="cd00086">
    <property type="entry name" value="homeodomain"/>
    <property type="match status" value="1"/>
</dbReference>
<dbReference type="FunFam" id="1.10.10.60:FF:000017">
    <property type="entry name" value="Homeobox protein antennapedia"/>
    <property type="match status" value="1"/>
</dbReference>
<dbReference type="Gene3D" id="1.10.10.60">
    <property type="entry name" value="Homeodomain-like"/>
    <property type="match status" value="1"/>
</dbReference>
<dbReference type="InterPro" id="IPR050296">
    <property type="entry name" value="Antp_homeobox"/>
</dbReference>
<dbReference type="InterPro" id="IPR001356">
    <property type="entry name" value="HD"/>
</dbReference>
<dbReference type="InterPro" id="IPR020479">
    <property type="entry name" value="HD_metazoa"/>
</dbReference>
<dbReference type="InterPro" id="IPR017995">
    <property type="entry name" value="Homeobox_antennapedia"/>
</dbReference>
<dbReference type="InterPro" id="IPR001827">
    <property type="entry name" value="Homeobox_Antennapedia_CS"/>
</dbReference>
<dbReference type="InterPro" id="IPR017970">
    <property type="entry name" value="Homeobox_CS"/>
</dbReference>
<dbReference type="InterPro" id="IPR009057">
    <property type="entry name" value="Homeodomain-like_sf"/>
</dbReference>
<dbReference type="PANTHER" id="PTHR45659">
    <property type="entry name" value="HOMEOBOX PROTEIN HOX"/>
    <property type="match status" value="1"/>
</dbReference>
<dbReference type="PANTHER" id="PTHR45659:SF9">
    <property type="entry name" value="HOMEOBOX PROTEIN HOX-B6"/>
    <property type="match status" value="1"/>
</dbReference>
<dbReference type="Pfam" id="PF00046">
    <property type="entry name" value="Homeodomain"/>
    <property type="match status" value="1"/>
</dbReference>
<dbReference type="PRINTS" id="PR00025">
    <property type="entry name" value="ANTENNAPEDIA"/>
</dbReference>
<dbReference type="PRINTS" id="PR00024">
    <property type="entry name" value="HOMEOBOX"/>
</dbReference>
<dbReference type="SMART" id="SM00389">
    <property type="entry name" value="HOX"/>
    <property type="match status" value="1"/>
</dbReference>
<dbReference type="SUPFAM" id="SSF46689">
    <property type="entry name" value="Homeodomain-like"/>
    <property type="match status" value="1"/>
</dbReference>
<dbReference type="PROSITE" id="PS00032">
    <property type="entry name" value="ANTENNAPEDIA"/>
    <property type="match status" value="1"/>
</dbReference>
<dbReference type="PROSITE" id="PS00027">
    <property type="entry name" value="HOMEOBOX_1"/>
    <property type="match status" value="1"/>
</dbReference>
<dbReference type="PROSITE" id="PS50071">
    <property type="entry name" value="HOMEOBOX_2"/>
    <property type="match status" value="1"/>
</dbReference>